<proteinExistence type="inferred from homology"/>
<accession>Q5DUX7</accession>
<gene>
    <name type="primary">rpl2</name>
</gene>
<comment type="subunit">
    <text evidence="1">Probably part of the large ribosomal subunit.</text>
</comment>
<comment type="subcellular location">
    <subcellularLocation>
        <location evidence="2">Hydrogenosome</location>
    </subcellularLocation>
</comment>
<comment type="similarity">
    <text evidence="1">Belongs to the universal ribosomal protein uL2 family.</text>
</comment>
<reference key="1">
    <citation type="journal article" date="2005" name="Nature">
        <title>An anaerobic mitochondrion that produces hydrogen.</title>
        <authorList>
            <person name="Boxma B."/>
            <person name="de Graaf R.M."/>
            <person name="van der Staay G.W.M."/>
            <person name="van Alen T.A."/>
            <person name="Ricard G."/>
            <person name="Gabaldon T."/>
            <person name="van Hoek A.H.A.M."/>
            <person name="Moon-van der Staay S.Y."/>
            <person name="Koopman W.J.H."/>
            <person name="van Hellemond J.J."/>
            <person name="Tielens A.G.M."/>
            <person name="Friedrich T."/>
            <person name="Veenhuis M."/>
            <person name="Huynen M.A."/>
            <person name="Hackstein J.H.P."/>
        </authorList>
    </citation>
    <scope>NUCLEOTIDE SEQUENCE [LARGE SCALE GENOMIC DNA]</scope>
</reference>
<protein>
    <recommendedName>
        <fullName evidence="1">Large ribosomal subunit protein uL2m</fullName>
    </recommendedName>
    <alternativeName>
        <fullName>60S ribosomal protein L2, hydrogenosomal</fullName>
    </alternativeName>
</protein>
<name>RL2H_NYCOV</name>
<keyword id="KW-0377">Hydrogenosome</keyword>
<keyword id="KW-0687">Ribonucleoprotein</keyword>
<keyword id="KW-0689">Ribosomal protein</keyword>
<evidence type="ECO:0000305" key="1"/>
<evidence type="ECO:0000305" key="2">
    <source>
    </source>
</evidence>
<sequence length="290" mass="33902">MRFFKQTSTNLNQLLYGIDPRGSKRGRDAYLYYRSTTQSGHHKRTWVHTFFRILQYNKFLYMPSKASGHDTYGHHTVSSKGSTHKFKRALHSINMNNMRIFLYAFWYIRDPRSYRLSGISFSTDGGIQTLPVTRRFHLMRLYLAADFKEFFTLDLRWVNSIRYIENIQKIRSFTLVSYVPNILNGRPLFARARGSACLVRYRNKLQHLGLIWVKLPSGKYRRVSNGNSVLLGKIAPKLRSELGNTRAGYWVNRGIKPQVRGIVKNPVDHPNGGRARSIARHRSPWGWFTK</sequence>
<dbReference type="EMBL" id="AJ871267">
    <property type="protein sequence ID" value="CAI38861.1"/>
    <property type="molecule type" value="Genomic_DNA"/>
</dbReference>
<dbReference type="SMR" id="Q5DUX7"/>
<dbReference type="GO" id="GO:0042566">
    <property type="term" value="C:hydrogenosome"/>
    <property type="evidence" value="ECO:0007669"/>
    <property type="project" value="UniProtKB-SubCell"/>
</dbReference>
<dbReference type="GO" id="GO:1990904">
    <property type="term" value="C:ribonucleoprotein complex"/>
    <property type="evidence" value="ECO:0007669"/>
    <property type="project" value="UniProtKB-KW"/>
</dbReference>
<dbReference type="GO" id="GO:0005840">
    <property type="term" value="C:ribosome"/>
    <property type="evidence" value="ECO:0007669"/>
    <property type="project" value="UniProtKB-KW"/>
</dbReference>
<dbReference type="GO" id="GO:0003735">
    <property type="term" value="F:structural constituent of ribosome"/>
    <property type="evidence" value="ECO:0007669"/>
    <property type="project" value="InterPro"/>
</dbReference>
<dbReference type="GO" id="GO:0006412">
    <property type="term" value="P:translation"/>
    <property type="evidence" value="ECO:0007669"/>
    <property type="project" value="InterPro"/>
</dbReference>
<dbReference type="Gene3D" id="4.10.950.10">
    <property type="entry name" value="Ribosomal protein L2, domain 3"/>
    <property type="match status" value="1"/>
</dbReference>
<dbReference type="InterPro" id="IPR022669">
    <property type="entry name" value="Ribosomal_uL2_C"/>
</dbReference>
<dbReference type="InterPro" id="IPR022671">
    <property type="entry name" value="Ribosomal_uL2_CS"/>
</dbReference>
<dbReference type="InterPro" id="IPR014726">
    <property type="entry name" value="Ribosomal_uL2_dom3"/>
</dbReference>
<dbReference type="InterPro" id="IPR008991">
    <property type="entry name" value="Translation_prot_SH3-like_sf"/>
</dbReference>
<dbReference type="Pfam" id="PF03947">
    <property type="entry name" value="Ribosomal_L2_C"/>
    <property type="match status" value="1"/>
</dbReference>
<dbReference type="SMART" id="SM01382">
    <property type="entry name" value="Ribosomal_L2_C"/>
    <property type="match status" value="1"/>
</dbReference>
<dbReference type="SUPFAM" id="SSF50104">
    <property type="entry name" value="Translation proteins SH3-like domain"/>
    <property type="match status" value="1"/>
</dbReference>
<dbReference type="PROSITE" id="PS00467">
    <property type="entry name" value="RIBOSOMAL_L2"/>
    <property type="match status" value="1"/>
</dbReference>
<organism>
    <name type="scientific">Nyctotherus ovalis</name>
    <dbReference type="NCBI Taxonomy" id="70075"/>
    <lineage>
        <taxon>Eukaryota</taxon>
        <taxon>Sar</taxon>
        <taxon>Alveolata</taxon>
        <taxon>Ciliophora</taxon>
        <taxon>Intramacronucleata</taxon>
        <taxon>Armophorea</taxon>
        <taxon>Clevelandellida</taxon>
        <taxon>Nyctotheridae</taxon>
        <taxon>Nyctotherus</taxon>
    </lineage>
</organism>
<feature type="chain" id="PRO_0000129742" description="Large ribosomal subunit protein uL2m">
    <location>
        <begin position="1"/>
        <end position="290"/>
    </location>
</feature>
<geneLocation type="hydrogenosome"/>